<reference key="1">
    <citation type="journal article" date="2004" name="Nat. Genet.">
        <title>Complete sequencing and characterization of 21,243 full-length human cDNAs.</title>
        <authorList>
            <person name="Ota T."/>
            <person name="Suzuki Y."/>
            <person name="Nishikawa T."/>
            <person name="Otsuki T."/>
            <person name="Sugiyama T."/>
            <person name="Irie R."/>
            <person name="Wakamatsu A."/>
            <person name="Hayashi K."/>
            <person name="Sato H."/>
            <person name="Nagai K."/>
            <person name="Kimura K."/>
            <person name="Makita H."/>
            <person name="Sekine M."/>
            <person name="Obayashi M."/>
            <person name="Nishi T."/>
            <person name="Shibahara T."/>
            <person name="Tanaka T."/>
            <person name="Ishii S."/>
            <person name="Yamamoto J."/>
            <person name="Saito K."/>
            <person name="Kawai Y."/>
            <person name="Isono Y."/>
            <person name="Nakamura Y."/>
            <person name="Nagahari K."/>
            <person name="Murakami K."/>
            <person name="Yasuda T."/>
            <person name="Iwayanagi T."/>
            <person name="Wagatsuma M."/>
            <person name="Shiratori A."/>
            <person name="Sudo H."/>
            <person name="Hosoiri T."/>
            <person name="Kaku Y."/>
            <person name="Kodaira H."/>
            <person name="Kondo H."/>
            <person name="Sugawara M."/>
            <person name="Takahashi M."/>
            <person name="Kanda K."/>
            <person name="Yokoi T."/>
            <person name="Furuya T."/>
            <person name="Kikkawa E."/>
            <person name="Omura Y."/>
            <person name="Abe K."/>
            <person name="Kamihara K."/>
            <person name="Katsuta N."/>
            <person name="Sato K."/>
            <person name="Tanikawa M."/>
            <person name="Yamazaki M."/>
            <person name="Ninomiya K."/>
            <person name="Ishibashi T."/>
            <person name="Yamashita H."/>
            <person name="Murakawa K."/>
            <person name="Fujimori K."/>
            <person name="Tanai H."/>
            <person name="Kimata M."/>
            <person name="Watanabe M."/>
            <person name="Hiraoka S."/>
            <person name="Chiba Y."/>
            <person name="Ishida S."/>
            <person name="Ono Y."/>
            <person name="Takiguchi S."/>
            <person name="Watanabe S."/>
            <person name="Yosida M."/>
            <person name="Hotuta T."/>
            <person name="Kusano J."/>
            <person name="Kanehori K."/>
            <person name="Takahashi-Fujii A."/>
            <person name="Hara H."/>
            <person name="Tanase T.-O."/>
            <person name="Nomura Y."/>
            <person name="Togiya S."/>
            <person name="Komai F."/>
            <person name="Hara R."/>
            <person name="Takeuchi K."/>
            <person name="Arita M."/>
            <person name="Imose N."/>
            <person name="Musashino K."/>
            <person name="Yuuki H."/>
            <person name="Oshima A."/>
            <person name="Sasaki N."/>
            <person name="Aotsuka S."/>
            <person name="Yoshikawa Y."/>
            <person name="Matsunawa H."/>
            <person name="Ichihara T."/>
            <person name="Shiohata N."/>
            <person name="Sano S."/>
            <person name="Moriya S."/>
            <person name="Momiyama H."/>
            <person name="Satoh N."/>
            <person name="Takami S."/>
            <person name="Terashima Y."/>
            <person name="Suzuki O."/>
            <person name="Nakagawa S."/>
            <person name="Senoh A."/>
            <person name="Mizoguchi H."/>
            <person name="Goto Y."/>
            <person name="Shimizu F."/>
            <person name="Wakebe H."/>
            <person name="Hishigaki H."/>
            <person name="Watanabe T."/>
            <person name="Sugiyama A."/>
            <person name="Takemoto M."/>
            <person name="Kawakami B."/>
            <person name="Yamazaki M."/>
            <person name="Watanabe K."/>
            <person name="Kumagai A."/>
            <person name="Itakura S."/>
            <person name="Fukuzumi Y."/>
            <person name="Fujimori Y."/>
            <person name="Komiyama M."/>
            <person name="Tashiro H."/>
            <person name="Tanigami A."/>
            <person name="Fujiwara T."/>
            <person name="Ono T."/>
            <person name="Yamada K."/>
            <person name="Fujii Y."/>
            <person name="Ozaki K."/>
            <person name="Hirao M."/>
            <person name="Ohmori Y."/>
            <person name="Kawabata A."/>
            <person name="Hikiji T."/>
            <person name="Kobatake N."/>
            <person name="Inagaki H."/>
            <person name="Ikema Y."/>
            <person name="Okamoto S."/>
            <person name="Okitani R."/>
            <person name="Kawakami T."/>
            <person name="Noguchi S."/>
            <person name="Itoh T."/>
            <person name="Shigeta K."/>
            <person name="Senba T."/>
            <person name="Matsumura K."/>
            <person name="Nakajima Y."/>
            <person name="Mizuno T."/>
            <person name="Morinaga M."/>
            <person name="Sasaki M."/>
            <person name="Togashi T."/>
            <person name="Oyama M."/>
            <person name="Hata H."/>
            <person name="Watanabe M."/>
            <person name="Komatsu T."/>
            <person name="Mizushima-Sugano J."/>
            <person name="Satoh T."/>
            <person name="Shirai Y."/>
            <person name="Takahashi Y."/>
            <person name="Nakagawa K."/>
            <person name="Okumura K."/>
            <person name="Nagase T."/>
            <person name="Nomura N."/>
            <person name="Kikuchi H."/>
            <person name="Masuho Y."/>
            <person name="Yamashita R."/>
            <person name="Nakai K."/>
            <person name="Yada T."/>
            <person name="Nakamura Y."/>
            <person name="Ohara O."/>
            <person name="Isogai T."/>
            <person name="Sugano S."/>
        </authorList>
    </citation>
    <scope>NUCLEOTIDE SEQUENCE [LARGE SCALE MRNA] (ISOFORM 2)</scope>
    <source>
        <tissue>Testis</tissue>
    </source>
</reference>
<reference key="2">
    <citation type="journal article" date="2006" name="Nature">
        <title>Human chromosome 11 DNA sequence and analysis including novel gene identification.</title>
        <authorList>
            <person name="Taylor T.D."/>
            <person name="Noguchi H."/>
            <person name="Totoki Y."/>
            <person name="Toyoda A."/>
            <person name="Kuroki Y."/>
            <person name="Dewar K."/>
            <person name="Lloyd C."/>
            <person name="Itoh T."/>
            <person name="Takeda T."/>
            <person name="Kim D.-W."/>
            <person name="She X."/>
            <person name="Barlow K.F."/>
            <person name="Bloom T."/>
            <person name="Bruford E."/>
            <person name="Chang J.L."/>
            <person name="Cuomo C.A."/>
            <person name="Eichler E."/>
            <person name="FitzGerald M.G."/>
            <person name="Jaffe D.B."/>
            <person name="LaButti K."/>
            <person name="Nicol R."/>
            <person name="Park H.-S."/>
            <person name="Seaman C."/>
            <person name="Sougnez C."/>
            <person name="Yang X."/>
            <person name="Zimmer A.R."/>
            <person name="Zody M.C."/>
            <person name="Birren B.W."/>
            <person name="Nusbaum C."/>
            <person name="Fujiyama A."/>
            <person name="Hattori M."/>
            <person name="Rogers J."/>
            <person name="Lander E.S."/>
            <person name="Sakaki Y."/>
        </authorList>
    </citation>
    <scope>NUCLEOTIDE SEQUENCE [LARGE SCALE GENOMIC DNA]</scope>
</reference>
<reference key="3">
    <citation type="journal article" date="2004" name="Genome Res.">
        <title>The status, quality, and expansion of the NIH full-length cDNA project: the Mammalian Gene Collection (MGC).</title>
        <authorList>
            <consortium name="The MGC Project Team"/>
        </authorList>
    </citation>
    <scope>NUCLEOTIDE SEQUENCE [LARGE SCALE MRNA] (ISOFORM 1)</scope>
</reference>
<protein>
    <recommendedName>
        <fullName evidence="1">Membrane-anchored junction protein</fullName>
    </recommendedName>
</protein>
<accession>Q3KP22</accession>
<accession>B3KS99</accession>
<accession>E9PPE5</accession>
<name>MAJIN_HUMAN</name>
<dbReference type="EMBL" id="AK093130">
    <property type="protein sequence ID" value="BAG52661.1"/>
    <property type="molecule type" value="mRNA"/>
</dbReference>
<dbReference type="EMBL" id="AP000436">
    <property type="status" value="NOT_ANNOTATED_CDS"/>
    <property type="molecule type" value="Genomic_DNA"/>
</dbReference>
<dbReference type="EMBL" id="AP001187">
    <property type="status" value="NOT_ANNOTATED_CDS"/>
    <property type="molecule type" value="Genomic_DNA"/>
</dbReference>
<dbReference type="EMBL" id="BC106951">
    <property type="protein sequence ID" value="AAI06952.1"/>
    <property type="molecule type" value="mRNA"/>
</dbReference>
<dbReference type="EMBL" id="BC106952">
    <property type="protein sequence ID" value="AAI06953.1"/>
    <property type="molecule type" value="mRNA"/>
</dbReference>
<dbReference type="CCDS" id="CCDS31603.1">
    <molecule id="Q3KP22-3"/>
</dbReference>
<dbReference type="CCDS" id="CCDS73316.1">
    <molecule id="Q3KP22-1"/>
</dbReference>
<dbReference type="RefSeq" id="NP_001032302.1">
    <molecule id="Q3KP22-3"/>
    <property type="nucleotide sequence ID" value="NM_001037225.3"/>
</dbReference>
<dbReference type="RefSeq" id="NP_001287732.1">
    <molecule id="Q3KP22-1"/>
    <property type="nucleotide sequence ID" value="NM_001300803.2"/>
</dbReference>
<dbReference type="RefSeq" id="NP_001305737.1">
    <molecule id="Q3KP22-4"/>
    <property type="nucleotide sequence ID" value="NM_001318808.2"/>
</dbReference>
<dbReference type="PDB" id="6GNX">
    <property type="method" value="X-ray"/>
    <property type="resolution" value="2.90 A"/>
    <property type="chains" value="A/C=1-49"/>
</dbReference>
<dbReference type="PDB" id="6GNY">
    <property type="method" value="X-ray"/>
    <property type="resolution" value="1.85 A"/>
    <property type="chains" value="A/C=1-49"/>
</dbReference>
<dbReference type="PDB" id="6J08">
    <property type="method" value="X-ray"/>
    <property type="resolution" value="2.90 A"/>
    <property type="chains" value="A/B/C=2-49"/>
</dbReference>
<dbReference type="PDBsum" id="6GNX"/>
<dbReference type="PDBsum" id="6GNY"/>
<dbReference type="PDBsum" id="6J08"/>
<dbReference type="SMR" id="Q3KP22"/>
<dbReference type="BioGRID" id="129469">
    <property type="interactions" value="11"/>
</dbReference>
<dbReference type="FunCoup" id="Q3KP22">
    <property type="interactions" value="4"/>
</dbReference>
<dbReference type="IntAct" id="Q3KP22">
    <property type="interactions" value="8"/>
</dbReference>
<dbReference type="iPTMnet" id="Q3KP22"/>
<dbReference type="PhosphoSitePlus" id="Q3KP22"/>
<dbReference type="BioMuta" id="MAJIN"/>
<dbReference type="jPOST" id="Q3KP22"/>
<dbReference type="MassIVE" id="Q3KP22"/>
<dbReference type="PeptideAtlas" id="Q3KP22"/>
<dbReference type="ProteomicsDB" id="22695"/>
<dbReference type="ProteomicsDB" id="61710">
    <molecule id="Q3KP22-1"/>
</dbReference>
<dbReference type="Antibodypedia" id="52613">
    <property type="antibodies" value="41 antibodies from 13 providers"/>
</dbReference>
<dbReference type="DNASU" id="283129"/>
<dbReference type="Ensembl" id="ENST00000301896.6">
    <molecule id="Q3KP22-3"/>
    <property type="protein sequence ID" value="ENSP00000301896.5"/>
    <property type="gene ID" value="ENSG00000168070.12"/>
</dbReference>
<dbReference type="Ensembl" id="ENST00000432175.5">
    <molecule id="Q3KP22-3"/>
    <property type="protein sequence ID" value="ENSP00000395273.1"/>
    <property type="gene ID" value="ENSG00000168070.12"/>
</dbReference>
<dbReference type="Ensembl" id="ENST00000530444.5">
    <molecule id="Q3KP22-1"/>
    <property type="protein sequence ID" value="ENSP00000434568.1"/>
    <property type="gene ID" value="ENSG00000168070.12"/>
</dbReference>
<dbReference type="GeneID" id="283129"/>
<dbReference type="KEGG" id="hsa:283129"/>
<dbReference type="MANE-Select" id="ENST00000301896.6">
    <molecule id="Q3KP22-3"/>
    <property type="protein sequence ID" value="ENSP00000301896.5"/>
    <property type="RefSeq nucleotide sequence ID" value="NM_001037225.3"/>
    <property type="RefSeq protein sequence ID" value="NP_001032302.1"/>
</dbReference>
<dbReference type="UCSC" id="uc001ocb.2">
    <molecule id="Q3KP22-1"/>
    <property type="organism name" value="human"/>
</dbReference>
<dbReference type="UCSC" id="uc001ocd.2">
    <property type="organism name" value="human"/>
</dbReference>
<dbReference type="AGR" id="HGNC:27441"/>
<dbReference type="CTD" id="283129"/>
<dbReference type="DisGeNET" id="283129"/>
<dbReference type="GeneCards" id="MAJIN"/>
<dbReference type="HGNC" id="HGNC:27441">
    <property type="gene designation" value="MAJIN"/>
</dbReference>
<dbReference type="HPA" id="ENSG00000168070">
    <property type="expression patterns" value="Tissue enriched (testis)"/>
</dbReference>
<dbReference type="MIM" id="617130">
    <property type="type" value="gene"/>
</dbReference>
<dbReference type="neXtProt" id="NX_Q3KP22"/>
<dbReference type="OpenTargets" id="ENSG00000168070"/>
<dbReference type="PharmGKB" id="PA162377786"/>
<dbReference type="VEuPathDB" id="HostDB:ENSG00000168070"/>
<dbReference type="eggNOG" id="ENOG502S50S">
    <property type="taxonomic scope" value="Eukaryota"/>
</dbReference>
<dbReference type="GeneTree" id="ENSGT00390000007971"/>
<dbReference type="HOGENOM" id="CLU_094252_0_0_1"/>
<dbReference type="InParanoid" id="Q3KP22"/>
<dbReference type="OMA" id="XKSKWER"/>
<dbReference type="OrthoDB" id="6162963at2759"/>
<dbReference type="PAN-GO" id="Q3KP22">
    <property type="GO annotations" value="3 GO annotations based on evolutionary models"/>
</dbReference>
<dbReference type="TreeFam" id="TF336863"/>
<dbReference type="PathwayCommons" id="Q3KP22"/>
<dbReference type="SignaLink" id="Q3KP22"/>
<dbReference type="SIGNOR" id="Q3KP22"/>
<dbReference type="BioGRID-ORCS" id="283129">
    <property type="hits" value="16 hits in 1113 CRISPR screens"/>
</dbReference>
<dbReference type="ChiTaRS" id="MAJIN">
    <property type="organism name" value="human"/>
</dbReference>
<dbReference type="GenomeRNAi" id="283129"/>
<dbReference type="Pharos" id="Q3KP22">
    <property type="development level" value="Tdark"/>
</dbReference>
<dbReference type="PRO" id="PR:Q3KP22"/>
<dbReference type="Proteomes" id="UP000005640">
    <property type="component" value="Chromosome 11"/>
</dbReference>
<dbReference type="RNAct" id="Q3KP22">
    <property type="molecule type" value="protein"/>
</dbReference>
<dbReference type="Bgee" id="ENSG00000168070">
    <property type="expression patterns" value="Expressed in right testis and 111 other cell types or tissues"/>
</dbReference>
<dbReference type="ExpressionAtlas" id="Q3KP22">
    <property type="expression patterns" value="baseline and differential"/>
</dbReference>
<dbReference type="GO" id="GO:0000781">
    <property type="term" value="C:chromosome, telomeric region"/>
    <property type="evidence" value="ECO:0000250"/>
    <property type="project" value="UniProtKB"/>
</dbReference>
<dbReference type="GO" id="GO:0005637">
    <property type="term" value="C:nuclear inner membrane"/>
    <property type="evidence" value="ECO:0000250"/>
    <property type="project" value="UniProtKB"/>
</dbReference>
<dbReference type="GO" id="GO:0003677">
    <property type="term" value="F:DNA binding"/>
    <property type="evidence" value="ECO:0007669"/>
    <property type="project" value="UniProtKB-KW"/>
</dbReference>
<dbReference type="GO" id="GO:1990918">
    <property type="term" value="P:double-strand break repair involved in meiotic recombination"/>
    <property type="evidence" value="ECO:0007669"/>
    <property type="project" value="Ensembl"/>
</dbReference>
<dbReference type="GO" id="GO:0007129">
    <property type="term" value="P:homologous chromosome pairing at meiosis"/>
    <property type="evidence" value="ECO:0000250"/>
    <property type="project" value="UniProtKB"/>
</dbReference>
<dbReference type="GO" id="GO:0070197">
    <property type="term" value="P:meiotic attachment of telomere to nuclear envelope"/>
    <property type="evidence" value="ECO:0000250"/>
    <property type="project" value="UniProtKB"/>
</dbReference>
<dbReference type="GO" id="GO:0045141">
    <property type="term" value="P:meiotic telomere clustering"/>
    <property type="evidence" value="ECO:0000250"/>
    <property type="project" value="UniProtKB"/>
</dbReference>
<dbReference type="GO" id="GO:0048477">
    <property type="term" value="P:oogenesis"/>
    <property type="evidence" value="ECO:0007669"/>
    <property type="project" value="Ensembl"/>
</dbReference>
<dbReference type="GO" id="GO:0007283">
    <property type="term" value="P:spermatogenesis"/>
    <property type="evidence" value="ECO:0007669"/>
    <property type="project" value="Ensembl"/>
</dbReference>
<dbReference type="InterPro" id="IPR027816">
    <property type="entry name" value="MAJIN"/>
</dbReference>
<dbReference type="PANTHER" id="PTHR35824:SF1">
    <property type="entry name" value="MEMBRANE-ANCHORED JUNCTION PROTEIN"/>
    <property type="match status" value="1"/>
</dbReference>
<dbReference type="PANTHER" id="PTHR35824">
    <property type="entry name" value="MEMBRANE-ANCHORED JUNCTION PROTEIN MAJIN"/>
    <property type="match status" value="1"/>
</dbReference>
<dbReference type="Pfam" id="PF15077">
    <property type="entry name" value="MAJIN"/>
    <property type="match status" value="2"/>
</dbReference>
<evidence type="ECO:0000250" key="1">
    <source>
        <dbReference type="UniProtKB" id="Q9D992"/>
    </source>
</evidence>
<evidence type="ECO:0000255" key="2"/>
<evidence type="ECO:0000256" key="3">
    <source>
        <dbReference type="SAM" id="MobiDB-lite"/>
    </source>
</evidence>
<evidence type="ECO:0000305" key="4"/>
<evidence type="ECO:0000312" key="5">
    <source>
        <dbReference type="HGNC" id="HGNC:27441"/>
    </source>
</evidence>
<evidence type="ECO:0007829" key="6">
    <source>
        <dbReference type="PDB" id="6GNX"/>
    </source>
</evidence>
<evidence type="ECO:0007829" key="7">
    <source>
        <dbReference type="PDB" id="6GNY"/>
    </source>
</evidence>
<comment type="function">
    <text evidence="1">Meiosis-specific telomere-associated protein involved in meiotic telomere attachment to the nucleus inner membrane, a crucial step for homologous pairing and synapsis. Component of the MAJIN-TERB1-TERB2 complex, which promotes telomere cap exchange by mediating attachment of telomeric DNA to the inner nuclear membrane and replacement of the protective cap of telomeric chromosomes: in early meiosis, the MAJIN-TERB1-TERB2 complex associates with telomeric DNA and the shelterin/telosome complex. During prophase, the complex matures and promotes release of the shelterin/telosome complex from telomeric DNA. In the complex, MAJIN acts as the anchoring subunit to the nucleus inner membrane. MAJIN shows DNA-binding activity, possibly for the stabilization of telomere attachment on the nucleus inner membrane.</text>
</comment>
<comment type="subunit">
    <text evidence="1">Component of the MAJIN-TERB1-TERB2 complex, composed of MAJIN, TERB1 and TERB2.</text>
</comment>
<comment type="interaction">
    <interactant intactId="EBI-21493388">
        <id>Q3KP22</id>
    </interactant>
    <interactant intactId="EBI-1965681">
        <id>P26998</id>
        <label>CRYBB3</label>
    </interactant>
    <organismsDiffer>false</organismsDiffer>
    <experiments>2</experiments>
</comment>
<comment type="interaction">
    <interactant intactId="EBI-18015780">
        <id>Q3KP22-3</id>
    </interactant>
    <interactant intactId="EBI-747133">
        <id>P27658</id>
        <label>COL8A1</label>
    </interactant>
    <organismsDiffer>false</organismsDiffer>
    <experiments>3</experiments>
</comment>
<comment type="interaction">
    <interactant intactId="EBI-18015780">
        <id>Q3KP22-3</id>
    </interactant>
    <interactant intactId="EBI-1053424">
        <id>O43741</id>
        <label>PRKAB2</label>
    </interactant>
    <organismsDiffer>false</organismsDiffer>
    <experiments>3</experiments>
</comment>
<comment type="interaction">
    <interactant intactId="EBI-18015780">
        <id>Q3KP22-3</id>
    </interactant>
    <interactant intactId="EBI-10329449">
        <id>Q9Y5W9</id>
        <label>SNX11</label>
    </interactant>
    <organismsDiffer>false</organismsDiffer>
    <experiments>3</experiments>
</comment>
<comment type="interaction">
    <interactant intactId="EBI-18015780">
        <id>Q3KP22-3</id>
    </interactant>
    <interactant intactId="EBI-745392">
        <id>Q9BSW7</id>
        <label>SYT17</label>
    </interactant>
    <organismsDiffer>false</organismsDiffer>
    <experiments>3</experiments>
</comment>
<comment type="interaction">
    <interactant intactId="EBI-18015780">
        <id>Q3KP22-3</id>
    </interactant>
    <interactant intactId="EBI-23751757">
        <id>Q8NHR7</id>
        <label>TERB2</label>
    </interactant>
    <organismsDiffer>false</organismsDiffer>
    <experiments>3</experiments>
</comment>
<comment type="interaction">
    <interactant intactId="EBI-18015780">
        <id>Q3KP22-3</id>
    </interactant>
    <interactant intactId="EBI-11525489">
        <id>Q86WT6-2</id>
        <label>TRIM69</label>
    </interactant>
    <organismsDiffer>false</organismsDiffer>
    <experiments>3</experiments>
</comment>
<comment type="subcellular location">
    <subcellularLocation>
        <location evidence="1">Nucleus inner membrane</location>
        <topology evidence="1">Single-pass membrane protein</topology>
    </subcellularLocation>
    <subcellularLocation>
        <location evidence="1">Chromosome</location>
        <location evidence="1">Telomere</location>
    </subcellularLocation>
    <text evidence="1">In leptotene spermatocytes, localizes to telomeres that localize to the nucleus inner membrane.</text>
</comment>
<comment type="alternative products">
    <event type="alternative splicing"/>
    <isoform>
        <id>Q3KP22-1</id>
        <name>3</name>
        <sequence type="displayed"/>
    </isoform>
    <isoform>
        <id>Q3KP22-3</id>
        <name>1</name>
        <sequence type="described" ref="VSP_058061 VSP_058062 VSP_058063"/>
    </isoform>
    <isoform>
        <id>Q3KP22-4</id>
        <name>2</name>
        <sequence type="described" ref="VSP_058060"/>
    </isoform>
</comment>
<comment type="similarity">
    <text evidence="4">Belongs to the MAJIN family.</text>
</comment>
<keyword id="KW-0002">3D-structure</keyword>
<keyword id="KW-0025">Alternative splicing</keyword>
<keyword id="KW-0158">Chromosome</keyword>
<keyword id="KW-0238">DNA-binding</keyword>
<keyword id="KW-0469">Meiosis</keyword>
<keyword id="KW-0472">Membrane</keyword>
<keyword id="KW-0539">Nucleus</keyword>
<keyword id="KW-1267">Proteomics identification</keyword>
<keyword id="KW-1185">Reference proteome</keyword>
<keyword id="KW-0779">Telomere</keyword>
<keyword id="KW-0812">Transmembrane</keyword>
<keyword id="KW-1133">Transmembrane helix</keyword>
<gene>
    <name evidence="5" type="primary">MAJIN</name>
    <name evidence="5" type="synonym">C11orf85</name>
</gene>
<sequence length="176" mass="20078">MSLKPFTYPFPETRFLHAGPNVYKFKIRYGKSIRGEEIENKEVITQELEVPVEKKAVGAVMRKRKHMDEPSSPSRPGLDRAKIGTSSQGPSKKKPPVETRRNRERKTQQGLQETLASDITDVQKQDSEWGHSLPGRIVPPLQHNSPPPKERAATGFFGFLSSLFPFRYFFRKSSHS</sequence>
<proteinExistence type="evidence at protein level"/>
<feature type="chain" id="PRO_0000325832" description="Membrane-anchored junction protein">
    <location>
        <begin position="1"/>
        <end position="176"/>
    </location>
</feature>
<feature type="topological domain" description="Nuclear" evidence="4">
    <location>
        <begin position="1"/>
        <end position="151"/>
    </location>
</feature>
<feature type="transmembrane region" description="Helical" evidence="2">
    <location>
        <begin position="152"/>
        <end position="170"/>
    </location>
</feature>
<feature type="topological domain" description="Perinuclear space" evidence="4">
    <location>
        <begin position="171"/>
        <end position="176"/>
    </location>
</feature>
<feature type="region of interest" description="Disordered" evidence="3">
    <location>
        <begin position="59"/>
        <end position="150"/>
    </location>
</feature>
<feature type="compositionally biased region" description="Basic and acidic residues" evidence="3">
    <location>
        <begin position="95"/>
        <end position="107"/>
    </location>
</feature>
<feature type="compositionally biased region" description="Polar residues" evidence="3">
    <location>
        <begin position="108"/>
        <end position="120"/>
    </location>
</feature>
<feature type="splice variant" id="VSP_058060" description="In isoform 2.">
    <original>MSLKPFTYPFPETRFLHAGPNVYKFKIRYGKSIRGEEIENKEVITQELE</original>
    <variation>MKWFHENLSPGKPISDSPLGL</variation>
    <location>
        <begin position="1"/>
        <end position="49"/>
    </location>
</feature>
<feature type="splice variant" id="VSP_058061" description="In isoform 1.">
    <original>E</original>
    <variation>EDSVRVVLGNLDNLQPFATEHFIVFPYKSKWERVSHLKFKHGEIILIPYPFVFTLYVEMKWFHENLSPGKPISDSPLGL</variation>
    <location>
        <position position="49"/>
    </location>
</feature>
<feature type="splice variant" id="VSP_058062" description="In isoform 1.">
    <original>AKIGTSSQGPSKKKPPVETRRNRERKTQQGLQETLASDITDVQKQDSEWGHSLPGRIV</original>
    <variation>IGKEKPNKDCRRLWPLISLMSRNKILSGDTACQGELSHPCSTTHLHLRSEQPPASLGF</variation>
    <location>
        <begin position="81"/>
        <end position="138"/>
    </location>
</feature>
<feature type="splice variant" id="VSP_058063" description="In isoform 1.">
    <location>
        <begin position="139"/>
        <end position="176"/>
    </location>
</feature>
<feature type="strand" evidence="6">
    <location>
        <begin position="8"/>
        <end position="10"/>
    </location>
</feature>
<feature type="strand" evidence="7">
    <location>
        <begin position="12"/>
        <end position="18"/>
    </location>
</feature>
<feature type="strand" evidence="7">
    <location>
        <begin position="21"/>
        <end position="29"/>
    </location>
</feature>
<feature type="helix" evidence="7">
    <location>
        <begin position="31"/>
        <end position="35"/>
    </location>
</feature>
<feature type="helix" evidence="7">
    <location>
        <begin position="41"/>
        <end position="49"/>
    </location>
</feature>
<organism>
    <name type="scientific">Homo sapiens</name>
    <name type="common">Human</name>
    <dbReference type="NCBI Taxonomy" id="9606"/>
    <lineage>
        <taxon>Eukaryota</taxon>
        <taxon>Metazoa</taxon>
        <taxon>Chordata</taxon>
        <taxon>Craniata</taxon>
        <taxon>Vertebrata</taxon>
        <taxon>Euteleostomi</taxon>
        <taxon>Mammalia</taxon>
        <taxon>Eutheria</taxon>
        <taxon>Euarchontoglires</taxon>
        <taxon>Primates</taxon>
        <taxon>Haplorrhini</taxon>
        <taxon>Catarrhini</taxon>
        <taxon>Hominidae</taxon>
        <taxon>Homo</taxon>
    </lineage>
</organism>